<organism>
    <name type="scientific">Shigella sonnei (strain Ss046)</name>
    <dbReference type="NCBI Taxonomy" id="300269"/>
    <lineage>
        <taxon>Bacteria</taxon>
        <taxon>Pseudomonadati</taxon>
        <taxon>Pseudomonadota</taxon>
        <taxon>Gammaproteobacteria</taxon>
        <taxon>Enterobacterales</taxon>
        <taxon>Enterobacteriaceae</taxon>
        <taxon>Shigella</taxon>
    </lineage>
</organism>
<name>ARNC_SHISS</name>
<evidence type="ECO:0000255" key="1">
    <source>
        <dbReference type="HAMAP-Rule" id="MF_01164"/>
    </source>
</evidence>
<protein>
    <recommendedName>
        <fullName evidence="1">Undecaprenyl-phosphate 4-deoxy-4-formamido-L-arabinose transferase</fullName>
        <ecNumber evidence="1">2.4.2.53</ecNumber>
    </recommendedName>
    <alternativeName>
        <fullName evidence="1">Undecaprenyl-phosphate Ara4FN transferase</fullName>
        <shortName evidence="1">Ara4FN transferase</shortName>
    </alternativeName>
</protein>
<dbReference type="EC" id="2.4.2.53" evidence="1"/>
<dbReference type="EMBL" id="CP000038">
    <property type="protein sequence ID" value="AAZ88960.1"/>
    <property type="molecule type" value="Genomic_DNA"/>
</dbReference>
<dbReference type="RefSeq" id="WP_000461657.1">
    <property type="nucleotide sequence ID" value="NC_007384.1"/>
</dbReference>
<dbReference type="SMR" id="Q3YZV2"/>
<dbReference type="CARD" id="ARO:3003578">
    <property type="molecule name" value="PmrF"/>
    <property type="mechanism identifier" value="ARO:0001001"/>
    <property type="mechanism name" value="antibiotic target alteration"/>
</dbReference>
<dbReference type="CAZy" id="GT2">
    <property type="family name" value="Glycosyltransferase Family 2"/>
</dbReference>
<dbReference type="GeneID" id="93774920"/>
<dbReference type="KEGG" id="ssn:SSON_2315"/>
<dbReference type="HOGENOM" id="CLU_033536_0_0_6"/>
<dbReference type="UniPathway" id="UPA00030"/>
<dbReference type="UniPathway" id="UPA00036">
    <property type="reaction ID" value="UER00495"/>
</dbReference>
<dbReference type="Proteomes" id="UP000002529">
    <property type="component" value="Chromosome"/>
</dbReference>
<dbReference type="GO" id="GO:0005886">
    <property type="term" value="C:plasma membrane"/>
    <property type="evidence" value="ECO:0007669"/>
    <property type="project" value="UniProtKB-SubCell"/>
</dbReference>
<dbReference type="GO" id="GO:0016780">
    <property type="term" value="F:phosphotransferase activity, for other substituted phosphate groups"/>
    <property type="evidence" value="ECO:0007669"/>
    <property type="project" value="UniProtKB-UniRule"/>
</dbReference>
<dbReference type="GO" id="GO:0099621">
    <property type="term" value="F:undecaprenyl-phosphate 4-deoxy-4-formamido-L-arabinose transferase activity"/>
    <property type="evidence" value="ECO:0007669"/>
    <property type="project" value="UniProtKB-EC"/>
</dbReference>
<dbReference type="GO" id="GO:0036108">
    <property type="term" value="P:4-amino-4-deoxy-alpha-L-arabinopyranosyl undecaprenyl phosphate biosynthetic process"/>
    <property type="evidence" value="ECO:0007669"/>
    <property type="project" value="UniProtKB-UniRule"/>
</dbReference>
<dbReference type="GO" id="GO:0009245">
    <property type="term" value="P:lipid A biosynthetic process"/>
    <property type="evidence" value="ECO:0007669"/>
    <property type="project" value="UniProtKB-UniRule"/>
</dbReference>
<dbReference type="GO" id="GO:0009103">
    <property type="term" value="P:lipopolysaccharide biosynthetic process"/>
    <property type="evidence" value="ECO:0007669"/>
    <property type="project" value="UniProtKB-UniRule"/>
</dbReference>
<dbReference type="GO" id="GO:0046677">
    <property type="term" value="P:response to antibiotic"/>
    <property type="evidence" value="ECO:0007669"/>
    <property type="project" value="UniProtKB-KW"/>
</dbReference>
<dbReference type="CDD" id="cd04187">
    <property type="entry name" value="DPM1_like_bac"/>
    <property type="match status" value="1"/>
</dbReference>
<dbReference type="FunFam" id="3.90.550.10:FF:000019">
    <property type="entry name" value="Undecaprenyl-phosphate 4-deoxy-4-formamido-L-arabinose transferase"/>
    <property type="match status" value="1"/>
</dbReference>
<dbReference type="Gene3D" id="3.90.550.10">
    <property type="entry name" value="Spore Coat Polysaccharide Biosynthesis Protein SpsA, Chain A"/>
    <property type="match status" value="1"/>
</dbReference>
<dbReference type="HAMAP" id="MF_01164">
    <property type="entry name" value="ArnC_transfer"/>
    <property type="match status" value="1"/>
</dbReference>
<dbReference type="InterPro" id="IPR022857">
    <property type="entry name" value="ArnC_tfrase"/>
</dbReference>
<dbReference type="InterPro" id="IPR001173">
    <property type="entry name" value="Glyco_trans_2-like"/>
</dbReference>
<dbReference type="InterPro" id="IPR050256">
    <property type="entry name" value="Glycosyltransferase_2"/>
</dbReference>
<dbReference type="InterPro" id="IPR029044">
    <property type="entry name" value="Nucleotide-diphossugar_trans"/>
</dbReference>
<dbReference type="NCBIfam" id="NF007986">
    <property type="entry name" value="PRK10714.1"/>
    <property type="match status" value="1"/>
</dbReference>
<dbReference type="PANTHER" id="PTHR48090:SF3">
    <property type="entry name" value="UNDECAPRENYL-PHOSPHATE 4-DEOXY-4-FORMAMIDO-L-ARABINOSE TRANSFERASE"/>
    <property type="match status" value="1"/>
</dbReference>
<dbReference type="PANTHER" id="PTHR48090">
    <property type="entry name" value="UNDECAPRENYL-PHOSPHATE 4-DEOXY-4-FORMAMIDO-L-ARABINOSE TRANSFERASE-RELATED"/>
    <property type="match status" value="1"/>
</dbReference>
<dbReference type="Pfam" id="PF00535">
    <property type="entry name" value="Glycos_transf_2"/>
    <property type="match status" value="1"/>
</dbReference>
<dbReference type="SUPFAM" id="SSF53448">
    <property type="entry name" value="Nucleotide-diphospho-sugar transferases"/>
    <property type="match status" value="1"/>
</dbReference>
<accession>Q3YZV2</accession>
<sequence>MFEIHPVKKVSVVIPVYNEQESLPELIRRTTTACESLGKEYEILLIDDGSSDNSAHMLVEASQAENSHIVSILLNRNYGQHSAIMAGFSHVTGDLIITLDADLQNPPEEIPRLVAKADEGYDVVGTVRQNRQDSWFRKTASKMINRLIQRTTGKAMGDYGCMLRAYRRHIVDAMLHCHERSTFIPILANIFARRAIEIPVHHAEREFGESKYSFMRLINLMYDLVTCLTTTPLRMLSLLGSIIAIGGFSIAVLLVILRLTFGPQWAAEGVFMLFAVLFTFIGAQFIGMGLLGEYIGRIYTDVRARPRYFVQQVIRPSSKENE</sequence>
<reference key="1">
    <citation type="journal article" date="2005" name="Nucleic Acids Res.">
        <title>Genome dynamics and diversity of Shigella species, the etiologic agents of bacillary dysentery.</title>
        <authorList>
            <person name="Yang F."/>
            <person name="Yang J."/>
            <person name="Zhang X."/>
            <person name="Chen L."/>
            <person name="Jiang Y."/>
            <person name="Yan Y."/>
            <person name="Tang X."/>
            <person name="Wang J."/>
            <person name="Xiong Z."/>
            <person name="Dong J."/>
            <person name="Xue Y."/>
            <person name="Zhu Y."/>
            <person name="Xu X."/>
            <person name="Sun L."/>
            <person name="Chen S."/>
            <person name="Nie H."/>
            <person name="Peng J."/>
            <person name="Xu J."/>
            <person name="Wang Y."/>
            <person name="Yuan Z."/>
            <person name="Wen Y."/>
            <person name="Yao Z."/>
            <person name="Shen Y."/>
            <person name="Qiang B."/>
            <person name="Hou Y."/>
            <person name="Yu J."/>
            <person name="Jin Q."/>
        </authorList>
    </citation>
    <scope>NUCLEOTIDE SEQUENCE [LARGE SCALE GENOMIC DNA]</scope>
    <source>
        <strain>Ss046</strain>
    </source>
</reference>
<keyword id="KW-0046">Antibiotic resistance</keyword>
<keyword id="KW-0997">Cell inner membrane</keyword>
<keyword id="KW-1003">Cell membrane</keyword>
<keyword id="KW-0328">Glycosyltransferase</keyword>
<keyword id="KW-0441">Lipid A biosynthesis</keyword>
<keyword id="KW-0444">Lipid biosynthesis</keyword>
<keyword id="KW-0443">Lipid metabolism</keyword>
<keyword id="KW-0448">Lipopolysaccharide biosynthesis</keyword>
<keyword id="KW-0472">Membrane</keyword>
<keyword id="KW-1185">Reference proteome</keyword>
<keyword id="KW-0808">Transferase</keyword>
<keyword id="KW-0812">Transmembrane</keyword>
<keyword id="KW-1133">Transmembrane helix</keyword>
<comment type="function">
    <text evidence="1">Catalyzes the transfer of 4-deoxy-4-formamido-L-arabinose from UDP to undecaprenyl phosphate. The modified arabinose is attached to lipid A and is required for resistance to polymyxin and cationic antimicrobial peptides.</text>
</comment>
<comment type="catalytic activity">
    <reaction evidence="1">
        <text>UDP-4-deoxy-4-formamido-beta-L-arabinose + di-trans,octa-cis-undecaprenyl phosphate = 4-deoxy-4-formamido-alpha-L-arabinopyranosyl di-trans,octa-cis-undecaprenyl phosphate + UDP</text>
        <dbReference type="Rhea" id="RHEA:27722"/>
        <dbReference type="ChEBI" id="CHEBI:58223"/>
        <dbReference type="ChEBI" id="CHEBI:58709"/>
        <dbReference type="ChEBI" id="CHEBI:58909"/>
        <dbReference type="ChEBI" id="CHEBI:60392"/>
        <dbReference type="EC" id="2.4.2.53"/>
    </reaction>
</comment>
<comment type="pathway">
    <text evidence="1">Glycolipid biosynthesis; 4-amino-4-deoxy-alpha-L-arabinose undecaprenyl phosphate biosynthesis; 4-amino-4-deoxy-alpha-L-arabinose undecaprenyl phosphate from UDP-4-deoxy-4-formamido-beta-L-arabinose and undecaprenyl phosphate: step 1/2.</text>
</comment>
<comment type="pathway">
    <text evidence="1">Bacterial outer membrane biogenesis; lipopolysaccharide biosynthesis.</text>
</comment>
<comment type="subcellular location">
    <subcellularLocation>
        <location evidence="1">Cell inner membrane</location>
        <topology evidence="1">Multi-pass membrane protein</topology>
    </subcellularLocation>
</comment>
<comment type="similarity">
    <text evidence="1">Belongs to the glycosyltransferase 2 family.</text>
</comment>
<feature type="chain" id="PRO_1000065659" description="Undecaprenyl-phosphate 4-deoxy-4-formamido-L-arabinose transferase">
    <location>
        <begin position="1"/>
        <end position="322"/>
    </location>
</feature>
<feature type="topological domain" description="Cytoplasmic" evidence="1">
    <location>
        <begin position="1"/>
        <end position="235"/>
    </location>
</feature>
<feature type="transmembrane region" description="Helical" evidence="1">
    <location>
        <begin position="236"/>
        <end position="256"/>
    </location>
</feature>
<feature type="topological domain" description="Periplasmic" evidence="1">
    <location>
        <begin position="257"/>
        <end position="269"/>
    </location>
</feature>
<feature type="transmembrane region" description="Helical" evidence="1">
    <location>
        <begin position="270"/>
        <end position="290"/>
    </location>
</feature>
<feature type="topological domain" description="Cytoplasmic" evidence="1">
    <location>
        <begin position="291"/>
        <end position="322"/>
    </location>
</feature>
<proteinExistence type="inferred from homology"/>
<gene>
    <name evidence="1" type="primary">arnC</name>
    <name type="ordered locus">SSON_2315</name>
</gene>